<comment type="function">
    <text evidence="1">Interferes with one step of hemostasis (modulation of platelet aggregation, or coagulation cascade, for example).</text>
</comment>
<comment type="subunit">
    <text evidence="1">Heterodimer; disulfide-linked.</text>
</comment>
<comment type="subcellular location">
    <subcellularLocation>
        <location evidence="1">Secreted</location>
    </subcellularLocation>
</comment>
<comment type="tissue specificity">
    <text>Expressed by the venom gland.</text>
</comment>
<comment type="miscellaneous">
    <text>Shows greater sequence similarity to the beta than alpha subunits compared to other heterodimer snaclecs.</text>
</comment>
<comment type="similarity">
    <text evidence="4">Belongs to the snaclec family.</text>
</comment>
<accession>Q6X5S0</accession>
<protein>
    <recommendedName>
        <fullName>Snaclec 7</fullName>
    </recommendedName>
    <alternativeName>
        <fullName>C-type lectin 7</fullName>
        <shortName>CTL-7</shortName>
    </alternativeName>
</protein>
<keyword id="KW-1015">Disulfide bond</keyword>
<keyword id="KW-1199">Hemostasis impairing toxin</keyword>
<keyword id="KW-0964">Secreted</keyword>
<keyword id="KW-0732">Signal</keyword>
<keyword id="KW-0800">Toxin</keyword>
<reference key="1">
    <citation type="journal article" date="2003" name="Gene">
        <title>Novel sequences encoding venom C-type lectins are conserved in phylogenetically and geographically distinct Echis and Bitis viper species.</title>
        <authorList>
            <person name="Harrison R.A."/>
            <person name="Oliver J."/>
            <person name="Hasson S.S."/>
            <person name="Bharati K."/>
            <person name="Theakston R.D.G."/>
        </authorList>
    </citation>
    <scope>NUCLEOTIDE SEQUENCE [MRNA]</scope>
    <source>
        <tissue>Venom gland</tissue>
    </source>
</reference>
<name>SL7_ECHPL</name>
<evidence type="ECO:0000250" key="1"/>
<evidence type="ECO:0000255" key="2"/>
<evidence type="ECO:0000255" key="3">
    <source>
        <dbReference type="PROSITE-ProRule" id="PRU00040"/>
    </source>
</evidence>
<evidence type="ECO:0000305" key="4"/>
<proteinExistence type="evidence at transcript level"/>
<dbReference type="EMBL" id="AY254340">
    <property type="protein sequence ID" value="AAQ01221.1"/>
    <property type="molecule type" value="mRNA"/>
</dbReference>
<dbReference type="SMR" id="Q6X5S0"/>
<dbReference type="GO" id="GO:0005576">
    <property type="term" value="C:extracellular region"/>
    <property type="evidence" value="ECO:0007669"/>
    <property type="project" value="UniProtKB-SubCell"/>
</dbReference>
<dbReference type="GO" id="GO:0090729">
    <property type="term" value="F:toxin activity"/>
    <property type="evidence" value="ECO:0007669"/>
    <property type="project" value="UniProtKB-KW"/>
</dbReference>
<dbReference type="CDD" id="cd00037">
    <property type="entry name" value="CLECT"/>
    <property type="match status" value="1"/>
</dbReference>
<dbReference type="FunFam" id="3.10.100.10:FF:000087">
    <property type="entry name" value="Snaclec rhodocetin subunit delta"/>
    <property type="match status" value="1"/>
</dbReference>
<dbReference type="Gene3D" id="3.10.100.10">
    <property type="entry name" value="Mannose-Binding Protein A, subunit A"/>
    <property type="match status" value="1"/>
</dbReference>
<dbReference type="InterPro" id="IPR001304">
    <property type="entry name" value="C-type_lectin-like"/>
</dbReference>
<dbReference type="InterPro" id="IPR016186">
    <property type="entry name" value="C-type_lectin-like/link_sf"/>
</dbReference>
<dbReference type="InterPro" id="IPR050111">
    <property type="entry name" value="C-type_lectin/snaclec_domain"/>
</dbReference>
<dbReference type="InterPro" id="IPR018378">
    <property type="entry name" value="C-type_lectin_CS"/>
</dbReference>
<dbReference type="InterPro" id="IPR016187">
    <property type="entry name" value="CTDL_fold"/>
</dbReference>
<dbReference type="PANTHER" id="PTHR22803">
    <property type="entry name" value="MANNOSE, PHOSPHOLIPASE, LECTIN RECEPTOR RELATED"/>
    <property type="match status" value="1"/>
</dbReference>
<dbReference type="Pfam" id="PF00059">
    <property type="entry name" value="Lectin_C"/>
    <property type="match status" value="1"/>
</dbReference>
<dbReference type="SMART" id="SM00034">
    <property type="entry name" value="CLECT"/>
    <property type="match status" value="1"/>
</dbReference>
<dbReference type="SUPFAM" id="SSF56436">
    <property type="entry name" value="C-type lectin-like"/>
    <property type="match status" value="1"/>
</dbReference>
<dbReference type="PROSITE" id="PS00615">
    <property type="entry name" value="C_TYPE_LECTIN_1"/>
    <property type="match status" value="1"/>
</dbReference>
<dbReference type="PROSITE" id="PS50041">
    <property type="entry name" value="C_TYPE_LECTIN_2"/>
    <property type="match status" value="1"/>
</dbReference>
<sequence>MGRFIFVSFGLLVVFLSLSGTGADQDCLPDWSSHERHCYKVINEYKTWEEAEQYCTEEANGGHLVSFHNRQEVAFVVKLGYTILKADVVWIGLRDFWRECQWEWSNGAKLNYKGWSDEPNCFIAYTVGNRWVRRKCSSTHPFVCKSPA</sequence>
<feature type="signal peptide" evidence="2">
    <location>
        <begin position="1"/>
        <end position="23"/>
    </location>
</feature>
<feature type="chain" id="PRO_0000355277" description="Snaclec 7">
    <location>
        <begin position="24"/>
        <end position="148"/>
    </location>
</feature>
<feature type="domain" description="C-type lectin" evidence="3">
    <location>
        <begin position="34"/>
        <end position="145"/>
    </location>
</feature>
<feature type="disulfide bond" evidence="3">
    <location>
        <begin position="27"/>
        <end position="38"/>
    </location>
</feature>
<feature type="disulfide bond" evidence="3">
    <location>
        <begin position="55"/>
        <end position="144"/>
    </location>
</feature>
<feature type="disulfide bond" description="Interchain" evidence="3">
    <location>
        <position position="100"/>
    </location>
</feature>
<feature type="disulfide bond" evidence="3">
    <location>
        <begin position="121"/>
        <end position="136"/>
    </location>
</feature>
<organism>
    <name type="scientific">Echis pyramidum leakeyi</name>
    <name type="common">Leakey's carpet viper</name>
    <name type="synonym">Echis carinatus leakeyi</name>
    <dbReference type="NCBI Taxonomy" id="38415"/>
    <lineage>
        <taxon>Eukaryota</taxon>
        <taxon>Metazoa</taxon>
        <taxon>Chordata</taxon>
        <taxon>Craniata</taxon>
        <taxon>Vertebrata</taxon>
        <taxon>Euteleostomi</taxon>
        <taxon>Lepidosauria</taxon>
        <taxon>Squamata</taxon>
        <taxon>Bifurcata</taxon>
        <taxon>Unidentata</taxon>
        <taxon>Episquamata</taxon>
        <taxon>Toxicofera</taxon>
        <taxon>Serpentes</taxon>
        <taxon>Colubroidea</taxon>
        <taxon>Viperidae</taxon>
        <taxon>Viperinae</taxon>
        <taxon>Echis</taxon>
    </lineage>
</organism>